<keyword id="KW-0067">ATP-binding</keyword>
<keyword id="KW-1003">Cell membrane</keyword>
<keyword id="KW-0472">Membrane</keyword>
<keyword id="KW-0547">Nucleotide-binding</keyword>
<keyword id="KW-1185">Reference proteome</keyword>
<keyword id="KW-1278">Translocase</keyword>
<keyword id="KW-0813">Transport</keyword>
<evidence type="ECO:0000255" key="1">
    <source>
        <dbReference type="HAMAP-Rule" id="MF_01715"/>
    </source>
</evidence>
<organism>
    <name type="scientific">Staphylococcus saprophyticus subsp. saprophyticus (strain ATCC 15305 / DSM 20229 / NCIMB 8711 / NCTC 7292 / S-41)</name>
    <dbReference type="NCBI Taxonomy" id="342451"/>
    <lineage>
        <taxon>Bacteria</taxon>
        <taxon>Bacillati</taxon>
        <taxon>Bacillota</taxon>
        <taxon>Bacilli</taxon>
        <taxon>Bacillales</taxon>
        <taxon>Staphylococcaceae</taxon>
        <taxon>Staphylococcus</taxon>
    </lineage>
</organism>
<gene>
    <name evidence="1" type="primary">tagH</name>
    <name type="ordered locus">SSP2082</name>
</gene>
<comment type="function">
    <text evidence="1">Part of the ABC transporter complex TagGH involved in teichoic acids export. Responsible for energy coupling to the transport system.</text>
</comment>
<comment type="catalytic activity">
    <reaction evidence="1">
        <text>ATP + H2O + teichoic acidSide 1 = ADP + phosphate + teichoic acidSide 2.</text>
        <dbReference type="EC" id="7.5.2.4"/>
    </reaction>
</comment>
<comment type="subunit">
    <text evidence="1">The complex is composed of two ATP-binding proteins (TagH) and two transmembrane proteins (TagG).</text>
</comment>
<comment type="subcellular location">
    <subcellularLocation>
        <location evidence="1">Cell membrane</location>
        <topology evidence="1">Peripheral membrane protein</topology>
    </subcellularLocation>
</comment>
<comment type="similarity">
    <text evidence="1">Belongs to the ABC transporter superfamily. Teichoic acids exporter (TC 3.A.1.104.1) family.</text>
</comment>
<name>TAGH_STAS1</name>
<accession>Q49VI3</accession>
<proteinExistence type="inferred from homology"/>
<feature type="chain" id="PRO_0000275854" description="Teichoic acids export ATP-binding protein TagH">
    <location>
        <begin position="1"/>
        <end position="264"/>
    </location>
</feature>
<feature type="domain" description="ABC transporter" evidence="1">
    <location>
        <begin position="22"/>
        <end position="243"/>
    </location>
</feature>
<feature type="binding site" evidence="1">
    <location>
        <begin position="57"/>
        <end position="64"/>
    </location>
    <ligand>
        <name>ATP</name>
        <dbReference type="ChEBI" id="CHEBI:30616"/>
    </ligand>
</feature>
<dbReference type="EC" id="7.5.2.4" evidence="1"/>
<dbReference type="EMBL" id="AP008934">
    <property type="protein sequence ID" value="BAE19227.1"/>
    <property type="molecule type" value="Genomic_DNA"/>
</dbReference>
<dbReference type="RefSeq" id="WP_011303725.1">
    <property type="nucleotide sequence ID" value="NZ_MTGA01000039.1"/>
</dbReference>
<dbReference type="SMR" id="Q49VI3"/>
<dbReference type="GeneID" id="66868239"/>
<dbReference type="KEGG" id="ssp:SSP2082"/>
<dbReference type="eggNOG" id="COG1134">
    <property type="taxonomic scope" value="Bacteria"/>
</dbReference>
<dbReference type="HOGENOM" id="CLU_000604_1_2_9"/>
<dbReference type="OrthoDB" id="9778870at2"/>
<dbReference type="Proteomes" id="UP000006371">
    <property type="component" value="Chromosome"/>
</dbReference>
<dbReference type="GO" id="GO:0005886">
    <property type="term" value="C:plasma membrane"/>
    <property type="evidence" value="ECO:0007669"/>
    <property type="project" value="UniProtKB-SubCell"/>
</dbReference>
<dbReference type="GO" id="GO:0015438">
    <property type="term" value="F:ABC-type teichoic acid transporter activity"/>
    <property type="evidence" value="ECO:0007669"/>
    <property type="project" value="UniProtKB-EC"/>
</dbReference>
<dbReference type="GO" id="GO:0005524">
    <property type="term" value="F:ATP binding"/>
    <property type="evidence" value="ECO:0007669"/>
    <property type="project" value="UniProtKB-KW"/>
</dbReference>
<dbReference type="GO" id="GO:0016887">
    <property type="term" value="F:ATP hydrolysis activity"/>
    <property type="evidence" value="ECO:0007669"/>
    <property type="project" value="InterPro"/>
</dbReference>
<dbReference type="CDD" id="cd03220">
    <property type="entry name" value="ABC_KpsT_Wzt"/>
    <property type="match status" value="1"/>
</dbReference>
<dbReference type="FunFam" id="3.40.50.300:FF:003010">
    <property type="entry name" value="Teichoic acids export ATP-binding protein TagH"/>
    <property type="match status" value="1"/>
</dbReference>
<dbReference type="Gene3D" id="3.40.50.300">
    <property type="entry name" value="P-loop containing nucleotide triphosphate hydrolases"/>
    <property type="match status" value="1"/>
</dbReference>
<dbReference type="InterPro" id="IPR003593">
    <property type="entry name" value="AAA+_ATPase"/>
</dbReference>
<dbReference type="InterPro" id="IPR003439">
    <property type="entry name" value="ABC_transporter-like_ATP-bd"/>
</dbReference>
<dbReference type="InterPro" id="IPR017871">
    <property type="entry name" value="ABC_transporter-like_CS"/>
</dbReference>
<dbReference type="InterPro" id="IPR015860">
    <property type="entry name" value="ABC_transpr_TagH-like"/>
</dbReference>
<dbReference type="InterPro" id="IPR050683">
    <property type="entry name" value="Bact_Polysacc_Export_ATP-bd"/>
</dbReference>
<dbReference type="InterPro" id="IPR027417">
    <property type="entry name" value="P-loop_NTPase"/>
</dbReference>
<dbReference type="NCBIfam" id="NF010066">
    <property type="entry name" value="PRK13546.1"/>
    <property type="match status" value="1"/>
</dbReference>
<dbReference type="PANTHER" id="PTHR46743">
    <property type="entry name" value="TEICHOIC ACIDS EXPORT ATP-BINDING PROTEIN TAGH"/>
    <property type="match status" value="1"/>
</dbReference>
<dbReference type="PANTHER" id="PTHR46743:SF2">
    <property type="entry name" value="TEICHOIC ACIDS EXPORT ATP-BINDING PROTEIN TAGH"/>
    <property type="match status" value="1"/>
</dbReference>
<dbReference type="Pfam" id="PF00005">
    <property type="entry name" value="ABC_tran"/>
    <property type="match status" value="1"/>
</dbReference>
<dbReference type="SMART" id="SM00382">
    <property type="entry name" value="AAA"/>
    <property type="match status" value="1"/>
</dbReference>
<dbReference type="SUPFAM" id="SSF52540">
    <property type="entry name" value="P-loop containing nucleoside triphosphate hydrolases"/>
    <property type="match status" value="1"/>
</dbReference>
<dbReference type="PROSITE" id="PS00211">
    <property type="entry name" value="ABC_TRANSPORTER_1"/>
    <property type="match status" value="1"/>
</dbReference>
<dbReference type="PROSITE" id="PS50893">
    <property type="entry name" value="ABC_TRANSPORTER_2"/>
    <property type="match status" value="1"/>
</dbReference>
<dbReference type="PROSITE" id="PS51251">
    <property type="entry name" value="TAGH"/>
    <property type="match status" value="1"/>
</dbReference>
<protein>
    <recommendedName>
        <fullName evidence="1">Teichoic acids export ATP-binding protein TagH</fullName>
        <ecNumber evidence="1">7.5.2.4</ecNumber>
    </recommendedName>
</protein>
<sequence length="264" mass="29965">MNVSVNIEHVTKEYRIYRNNKERLKDVIVPFHKNKTFYALNDLSLTAYEGDVIGLVGINGSGKSTLSNMIGGSLSPTEGDIKRDGDVSVIAINAGLNGQLTGIENIEFKMLCMGFTRKQIKKLTPEIIEFSELGEFIYQPVKKYSSGMRAKLGFSINITTNPDILVIDEALSVGDQTFAQKCLDKIFEYKEQGKTIFFVSHNMKQVREFCTKIAWIEAGKLKQFGELDDVLPEYEKFLNDFKKRSKGEQKKFRNDLDSSRFVVK</sequence>
<reference key="1">
    <citation type="journal article" date="2005" name="Proc. Natl. Acad. Sci. U.S.A.">
        <title>Whole genome sequence of Staphylococcus saprophyticus reveals the pathogenesis of uncomplicated urinary tract infection.</title>
        <authorList>
            <person name="Kuroda M."/>
            <person name="Yamashita A."/>
            <person name="Hirakawa H."/>
            <person name="Kumano M."/>
            <person name="Morikawa K."/>
            <person name="Higashide M."/>
            <person name="Maruyama A."/>
            <person name="Inose Y."/>
            <person name="Matoba K."/>
            <person name="Toh H."/>
            <person name="Kuhara S."/>
            <person name="Hattori M."/>
            <person name="Ohta T."/>
        </authorList>
    </citation>
    <scope>NUCLEOTIDE SEQUENCE [LARGE SCALE GENOMIC DNA]</scope>
    <source>
        <strain>ATCC 15305 / DSM 20229 / NCIMB 8711 / NCTC 7292 / S-41</strain>
    </source>
</reference>